<dbReference type="EC" id="2.5.-.-" evidence="1"/>
<dbReference type="EMBL" id="CP000890">
    <property type="protein sequence ID" value="ABX77549.1"/>
    <property type="molecule type" value="Genomic_DNA"/>
</dbReference>
<dbReference type="SMR" id="A9NCJ8"/>
<dbReference type="KEGG" id="cbs:COXBURSA331_A0839"/>
<dbReference type="HOGENOM" id="CLU_039781_1_0_6"/>
<dbReference type="GO" id="GO:0005737">
    <property type="term" value="C:cytoplasm"/>
    <property type="evidence" value="ECO:0007669"/>
    <property type="project" value="TreeGrafter"/>
</dbReference>
<dbReference type="GO" id="GO:0034038">
    <property type="term" value="F:deoxyhypusine synthase activity"/>
    <property type="evidence" value="ECO:0007669"/>
    <property type="project" value="TreeGrafter"/>
</dbReference>
<dbReference type="FunFam" id="3.40.910.10:FF:000006">
    <property type="entry name" value="Probable deoxyhypusine synthase"/>
    <property type="match status" value="1"/>
</dbReference>
<dbReference type="Gene3D" id="3.40.910.10">
    <property type="entry name" value="Deoxyhypusine synthase"/>
    <property type="match status" value="1"/>
</dbReference>
<dbReference type="HAMAP" id="MF_00640">
    <property type="entry name" value="DHS_like"/>
    <property type="match status" value="1"/>
</dbReference>
<dbReference type="InterPro" id="IPR002773">
    <property type="entry name" value="Deoxyhypusine_synthase"/>
</dbReference>
<dbReference type="InterPro" id="IPR023496">
    <property type="entry name" value="Deoxyhypusine_synthase-like"/>
</dbReference>
<dbReference type="InterPro" id="IPR036982">
    <property type="entry name" value="Deoxyhypusine_synthase_sf"/>
</dbReference>
<dbReference type="InterPro" id="IPR029035">
    <property type="entry name" value="DHS-like_NAD/FAD-binding_dom"/>
</dbReference>
<dbReference type="NCBIfam" id="NF002699">
    <property type="entry name" value="PRK02492.1"/>
    <property type="match status" value="1"/>
</dbReference>
<dbReference type="PANTHER" id="PTHR11703">
    <property type="entry name" value="DEOXYHYPUSINE SYNTHASE"/>
    <property type="match status" value="1"/>
</dbReference>
<dbReference type="PANTHER" id="PTHR11703:SF2">
    <property type="entry name" value="DEOXYHYPUSINE SYNTHASE-LIKE PROTEIN"/>
    <property type="match status" value="1"/>
</dbReference>
<dbReference type="Pfam" id="PF01916">
    <property type="entry name" value="DS"/>
    <property type="match status" value="1"/>
</dbReference>
<dbReference type="SUPFAM" id="SSF52467">
    <property type="entry name" value="DHS-like NAD/FAD-binding domain"/>
    <property type="match status" value="1"/>
</dbReference>
<protein>
    <recommendedName>
        <fullName evidence="1">Deoxyhypusine synthase-like protein</fullName>
        <ecNumber evidence="1">2.5.-.-</ecNumber>
    </recommendedName>
</protein>
<evidence type="ECO:0000255" key="1">
    <source>
        <dbReference type="HAMAP-Rule" id="MF_00640"/>
    </source>
</evidence>
<proteinExistence type="inferred from homology"/>
<comment type="similarity">
    <text evidence="1">Belongs to the deoxyhypusine synthase family.</text>
</comment>
<sequence length="352" mass="39570">MKNKNLSMPSLKEKLLQETVEHIDITRFDARPIIDAMDHMSFTSRDLARATQIFNRMLQDEQCSIILSLAGSTSAGGCMKLYADLVKYNMVDAIVATGASIVDMDFFEALGFRHYQGSPAVEDRQLRDLYIDRIYDTYIDEEDLQRCDHTIYEIANSLEPRPYSSREFIHHMGAYLAQGKAKKEESLVQLAYEHDVPIFCPAFTDSSAGFGLVLHQVKNPDRHLTIDSIRDFRELTDIKIKAGTTGLLMIGGGVPKNFVQDTVVCAEVIGKTVDMHKYAIQITVADVRDGACSSSTLKEACSWGKVDTAYEQMVYAEATSGLPLLASDAYHRGYWKDRSPRQYANLFKSESK</sequence>
<keyword id="KW-0808">Transferase</keyword>
<name>DHSL_COXBR</name>
<reference key="1">
    <citation type="submission" date="2007-11" db="EMBL/GenBank/DDBJ databases">
        <title>Genome sequencing of phylogenetically and phenotypically diverse Coxiella burnetii isolates.</title>
        <authorList>
            <person name="Seshadri R."/>
            <person name="Samuel J.E."/>
        </authorList>
    </citation>
    <scope>NUCLEOTIDE SEQUENCE [LARGE SCALE GENOMIC DNA]</scope>
    <source>
        <strain>RSA 331 / Henzerling II</strain>
    </source>
</reference>
<accession>A9NCJ8</accession>
<gene>
    <name type="ordered locus">COXBURSA331_A0839</name>
</gene>
<organism>
    <name type="scientific">Coxiella burnetii (strain RSA 331 / Henzerling II)</name>
    <dbReference type="NCBI Taxonomy" id="360115"/>
    <lineage>
        <taxon>Bacteria</taxon>
        <taxon>Pseudomonadati</taxon>
        <taxon>Pseudomonadota</taxon>
        <taxon>Gammaproteobacteria</taxon>
        <taxon>Legionellales</taxon>
        <taxon>Coxiellaceae</taxon>
        <taxon>Coxiella</taxon>
    </lineage>
</organism>
<feature type="chain" id="PRO_1000082697" description="Deoxyhypusine synthase-like protein">
    <location>
        <begin position="1"/>
        <end position="352"/>
    </location>
</feature>